<comment type="function">
    <text evidence="1">Ethanolamine phosphate transferase involved in glycosylphosphatidylinositol-anchor biosynthesis. Transfers ethanolamine phosphate to the GPI second mannose (By similarity).</text>
</comment>
<comment type="pathway">
    <text>Glycolipid biosynthesis; glycosylphosphatidylinositol-anchor biosynthesis.</text>
</comment>
<comment type="subcellular location">
    <subcellularLocation>
        <location evidence="1">Endoplasmic reticulum membrane</location>
        <topology evidence="1">Multi-pass membrane protein</topology>
    </subcellularLocation>
</comment>
<comment type="similarity">
    <text evidence="3">Belongs to the PIGG/PIGN/PIGO family. PIGG subfamily.</text>
</comment>
<comment type="sequence caution" evidence="3">
    <conflict type="erroneous gene model prediction">
        <sequence resource="EMBL-CDS" id="BAE61773"/>
    </conflict>
</comment>
<dbReference type="EC" id="2.-.-.-"/>
<dbReference type="EMBL" id="BA000053">
    <property type="protein sequence ID" value="BAE61773.1"/>
    <property type="status" value="ALT_SEQ"/>
    <property type="molecule type" value="Genomic_DNA"/>
</dbReference>
<dbReference type="SMR" id="Q2U9J2"/>
<dbReference type="STRING" id="510516.Q2U9J2"/>
<dbReference type="GlyCosmos" id="Q2U9J2">
    <property type="glycosylation" value="3 sites, No reported glycans"/>
</dbReference>
<dbReference type="EnsemblFungi" id="BAE61773">
    <property type="protein sequence ID" value="BAE61773"/>
    <property type="gene ID" value="AO090701000010"/>
</dbReference>
<dbReference type="UniPathway" id="UPA00196"/>
<dbReference type="Proteomes" id="UP000006564">
    <property type="component" value="Chromosome 5"/>
</dbReference>
<dbReference type="GO" id="GO:0005789">
    <property type="term" value="C:endoplasmic reticulum membrane"/>
    <property type="evidence" value="ECO:0007669"/>
    <property type="project" value="UniProtKB-SubCell"/>
</dbReference>
<dbReference type="GO" id="GO:0051267">
    <property type="term" value="F:CP2 mannose-ethanolamine phosphotransferase activity"/>
    <property type="evidence" value="ECO:0007669"/>
    <property type="project" value="TreeGrafter"/>
</dbReference>
<dbReference type="GO" id="GO:0006506">
    <property type="term" value="P:GPI anchor biosynthetic process"/>
    <property type="evidence" value="ECO:0007669"/>
    <property type="project" value="UniProtKB-UniPathway"/>
</dbReference>
<dbReference type="CDD" id="cd16024">
    <property type="entry name" value="GPI_EPT_2"/>
    <property type="match status" value="1"/>
</dbReference>
<dbReference type="FunFam" id="3.40.720.10:FF:000045">
    <property type="entry name" value="GPI ethanolamine phosphate transferase 2"/>
    <property type="match status" value="1"/>
</dbReference>
<dbReference type="Gene3D" id="3.40.720.10">
    <property type="entry name" value="Alkaline Phosphatase, subunit A"/>
    <property type="match status" value="1"/>
</dbReference>
<dbReference type="InterPro" id="IPR017850">
    <property type="entry name" value="Alkaline_phosphatase_core_sf"/>
</dbReference>
<dbReference type="InterPro" id="IPR002591">
    <property type="entry name" value="Phosphodiest/P_Trfase"/>
</dbReference>
<dbReference type="InterPro" id="IPR037674">
    <property type="entry name" value="PIG-G_N"/>
</dbReference>
<dbReference type="InterPro" id="IPR039527">
    <property type="entry name" value="PIGG/GPI7"/>
</dbReference>
<dbReference type="InterPro" id="IPR045687">
    <property type="entry name" value="PIGG/GPI7_C"/>
</dbReference>
<dbReference type="PANTHER" id="PTHR23072:SF0">
    <property type="entry name" value="GPI ETHANOLAMINE PHOSPHATE TRANSFERASE 2"/>
    <property type="match status" value="1"/>
</dbReference>
<dbReference type="PANTHER" id="PTHR23072">
    <property type="entry name" value="PHOSPHATIDYLINOSITOL GLYCAN-RELATED"/>
    <property type="match status" value="1"/>
</dbReference>
<dbReference type="Pfam" id="PF01663">
    <property type="entry name" value="Phosphodiest"/>
    <property type="match status" value="1"/>
</dbReference>
<dbReference type="Pfam" id="PF19316">
    <property type="entry name" value="PIGO_PIGG"/>
    <property type="match status" value="2"/>
</dbReference>
<dbReference type="SUPFAM" id="SSF53649">
    <property type="entry name" value="Alkaline phosphatase-like"/>
    <property type="match status" value="1"/>
</dbReference>
<proteinExistence type="inferred from homology"/>
<name>GPI7_ASPOR</name>
<evidence type="ECO:0000250" key="1"/>
<evidence type="ECO:0000255" key="2"/>
<evidence type="ECO:0000305" key="3"/>
<protein>
    <recommendedName>
        <fullName>GPI ethanolamine phosphate transferase 2</fullName>
        <ecNumber>2.-.-.-</ecNumber>
    </recommendedName>
    <alternativeName>
        <fullName>Glycosylphosphatidylinositol-anchor biosynthesis protein 7</fullName>
    </alternativeName>
</protein>
<sequence length="852" mass="94782">MKVARSKWTILIANILVPISILVFSSGFFPYKTLLTGFATHEHTIGGQIPPGVFDKVLLLQADFHASDFVYSQHSGFLFTQRLGGGFLIRSGAALPFTAYASAPTVTMPRLKAITTGSVPSFLDVILNIAEADTSSTLMHQDTWLAQLKAKGGKLVMYGDDTWLKLFPGMFHRADGTTSFFVSDFTEVDNNVTRHIPNELLQDDWSAFIMHYLGLDHIGHKAGPNSPYMITKQHEMDSVVSMVYTALEQEKHLKTTLFVLCGDHGMNEAGNHGGSSVGETSPALLFISPKFQRLETRNDSPTEEFSDLQYYHTVEQTDITPTLAGLLGLPIPLNSLGVFIPELLAMWDHGAKSIPLTSSSGPHRIHMLLENAKQLLGAVKGSFPSYSFEFDLMPVICSSQSLIDIERVQCAWFRVLETLNGSGANHDSEASSEIESALLLFLRNAQKLMSSAASDYDLIRLYVGLSISGFAISLTFFPAKRLLVNFAPAGMFLGFSILSYSTMMFASSYVEEEQQFWYWISMGWVVYLHVKYAGHFHGNSIQKSGPANGHWPFEPSLPWFGAAALAVSYRVLRRWNQTGQKFAAQPDITGSFFPSHQHTLWALLSLAASDSPELLGNSFLQPVAMLTDGMHLLYHARMVLCGISLLMIYSLYAGKARETTHKGRGKWPPSTIFHETLTLFLLMQSKVTNIPAFLVFRVQITILASMRLSTVEQTITSLLMQYVTFYAFGGSNAISSVDISNAYNGIGTYSVFIVGALTFISNWAAPIWWVSASRLLRSSQNREEKEAHVTILTLHMATILMSVMAACTTLRTHLFIWTVFSPKYLYTIAWAMINHIVVNVLGEIDWRLFMKR</sequence>
<reference key="1">
    <citation type="journal article" date="2005" name="Nature">
        <title>Genome sequencing and analysis of Aspergillus oryzae.</title>
        <authorList>
            <person name="Machida M."/>
            <person name="Asai K."/>
            <person name="Sano M."/>
            <person name="Tanaka T."/>
            <person name="Kumagai T."/>
            <person name="Terai G."/>
            <person name="Kusumoto K."/>
            <person name="Arima T."/>
            <person name="Akita O."/>
            <person name="Kashiwagi Y."/>
            <person name="Abe K."/>
            <person name="Gomi K."/>
            <person name="Horiuchi H."/>
            <person name="Kitamoto K."/>
            <person name="Kobayashi T."/>
            <person name="Takeuchi M."/>
            <person name="Denning D.W."/>
            <person name="Galagan J.E."/>
            <person name="Nierman W.C."/>
            <person name="Yu J."/>
            <person name="Archer D.B."/>
            <person name="Bennett J.W."/>
            <person name="Bhatnagar D."/>
            <person name="Cleveland T.E."/>
            <person name="Fedorova N.D."/>
            <person name="Gotoh O."/>
            <person name="Horikawa H."/>
            <person name="Hosoyama A."/>
            <person name="Ichinomiya M."/>
            <person name="Igarashi R."/>
            <person name="Iwashita K."/>
            <person name="Juvvadi P.R."/>
            <person name="Kato M."/>
            <person name="Kato Y."/>
            <person name="Kin T."/>
            <person name="Kokubun A."/>
            <person name="Maeda H."/>
            <person name="Maeyama N."/>
            <person name="Maruyama J."/>
            <person name="Nagasaki H."/>
            <person name="Nakajima T."/>
            <person name="Oda K."/>
            <person name="Okada K."/>
            <person name="Paulsen I."/>
            <person name="Sakamoto K."/>
            <person name="Sawano T."/>
            <person name="Takahashi M."/>
            <person name="Takase K."/>
            <person name="Terabayashi Y."/>
            <person name="Wortman J.R."/>
            <person name="Yamada O."/>
            <person name="Yamagata Y."/>
            <person name="Anazawa H."/>
            <person name="Hata Y."/>
            <person name="Koide Y."/>
            <person name="Komori T."/>
            <person name="Koyama Y."/>
            <person name="Minetoki T."/>
            <person name="Suharnan S."/>
            <person name="Tanaka A."/>
            <person name="Isono K."/>
            <person name="Kuhara S."/>
            <person name="Ogasawara N."/>
            <person name="Kikuchi H."/>
        </authorList>
    </citation>
    <scope>NUCLEOTIDE SEQUENCE [LARGE SCALE GENOMIC DNA]</scope>
    <source>
        <strain>ATCC 42149 / RIB 40</strain>
    </source>
</reference>
<keyword id="KW-0256">Endoplasmic reticulum</keyword>
<keyword id="KW-0325">Glycoprotein</keyword>
<keyword id="KW-0337">GPI-anchor biosynthesis</keyword>
<keyword id="KW-0472">Membrane</keyword>
<keyword id="KW-1185">Reference proteome</keyword>
<keyword id="KW-0808">Transferase</keyword>
<keyword id="KW-0812">Transmembrane</keyword>
<keyword id="KW-1133">Transmembrane helix</keyword>
<organism>
    <name type="scientific">Aspergillus oryzae (strain ATCC 42149 / RIB 40)</name>
    <name type="common">Yellow koji mold</name>
    <dbReference type="NCBI Taxonomy" id="510516"/>
    <lineage>
        <taxon>Eukaryota</taxon>
        <taxon>Fungi</taxon>
        <taxon>Dikarya</taxon>
        <taxon>Ascomycota</taxon>
        <taxon>Pezizomycotina</taxon>
        <taxon>Eurotiomycetes</taxon>
        <taxon>Eurotiomycetidae</taxon>
        <taxon>Eurotiales</taxon>
        <taxon>Aspergillaceae</taxon>
        <taxon>Aspergillus</taxon>
        <taxon>Aspergillus subgen. Circumdati</taxon>
    </lineage>
</organism>
<feature type="chain" id="PRO_0000246188" description="GPI ethanolamine phosphate transferase 2">
    <location>
        <begin position="1"/>
        <end position="852"/>
    </location>
</feature>
<feature type="transmembrane region" description="Helical" evidence="2">
    <location>
        <begin position="458"/>
        <end position="478"/>
    </location>
</feature>
<feature type="transmembrane region" description="Helical" evidence="2">
    <location>
        <begin position="486"/>
        <end position="506"/>
    </location>
</feature>
<feature type="transmembrane region" description="Helical" evidence="2">
    <location>
        <begin position="516"/>
        <end position="536"/>
    </location>
</feature>
<feature type="transmembrane region" description="Helical" evidence="2">
    <location>
        <begin position="632"/>
        <end position="652"/>
    </location>
</feature>
<feature type="transmembrane region" description="Helical" evidence="2">
    <location>
        <begin position="676"/>
        <end position="696"/>
    </location>
</feature>
<feature type="transmembrane region" description="Helical" evidence="2">
    <location>
        <begin position="714"/>
        <end position="734"/>
    </location>
</feature>
<feature type="transmembrane region" description="Helical" evidence="2">
    <location>
        <begin position="750"/>
        <end position="770"/>
    </location>
</feature>
<feature type="transmembrane region" description="Helical" evidence="2">
    <location>
        <begin position="787"/>
        <end position="807"/>
    </location>
</feature>
<feature type="transmembrane region" description="Helical" evidence="2">
    <location>
        <begin position="824"/>
        <end position="844"/>
    </location>
</feature>
<feature type="glycosylation site" description="N-linked (GlcNAc...) asparagine" evidence="2">
    <location>
        <position position="191"/>
    </location>
</feature>
<feature type="glycosylation site" description="N-linked (GlcNAc...) asparagine" evidence="2">
    <location>
        <position position="420"/>
    </location>
</feature>
<feature type="glycosylation site" description="N-linked (GlcNAc...) asparagine" evidence="2">
    <location>
        <position position="576"/>
    </location>
</feature>
<gene>
    <name type="primary">las21</name>
    <name type="synonym">gpi7</name>
    <name type="ORF">AO090701000010</name>
</gene>
<accession>Q2U9J2</accession>